<gene>
    <name type="primary">corA</name>
    <name type="ordered locus">HD_0721</name>
</gene>
<organism>
    <name type="scientific">Haemophilus ducreyi (strain 35000HP / ATCC 700724)</name>
    <dbReference type="NCBI Taxonomy" id="233412"/>
    <lineage>
        <taxon>Bacteria</taxon>
        <taxon>Pseudomonadati</taxon>
        <taxon>Pseudomonadota</taxon>
        <taxon>Gammaproteobacteria</taxon>
        <taxon>Pasteurellales</taxon>
        <taxon>Pasteurellaceae</taxon>
        <taxon>Haemophilus</taxon>
    </lineage>
</organism>
<keyword id="KW-0997">Cell inner membrane</keyword>
<keyword id="KW-1003">Cell membrane</keyword>
<keyword id="KW-0406">Ion transport</keyword>
<keyword id="KW-0460">Magnesium</keyword>
<keyword id="KW-0472">Membrane</keyword>
<keyword id="KW-1185">Reference proteome</keyword>
<keyword id="KW-0812">Transmembrane</keyword>
<keyword id="KW-1133">Transmembrane helix</keyword>
<keyword id="KW-0813">Transport</keyword>
<comment type="function">
    <text evidence="1 2">Mediates influx of magnesium ions (By similarity). Alternates between open and closed states. Activated by low cytoplasmic Mg(2+) levels. Inactive when cytoplasmic Mg(2+) levels are high (By similarity).</text>
</comment>
<comment type="catalytic activity">
    <reaction evidence="1">
        <text>Mg(2+)(in) = Mg(2+)(out)</text>
        <dbReference type="Rhea" id="RHEA:29827"/>
        <dbReference type="ChEBI" id="CHEBI:18420"/>
    </reaction>
</comment>
<comment type="subunit">
    <text evidence="2">Homopentamer. In the absence of Mg(2+), interactions between subunits are weakened, and dimers, trimers and tetramers can be observed in vitro (By similarity).</text>
</comment>
<comment type="subcellular location">
    <subcellularLocation>
        <location evidence="1">Cell inner membrane</location>
        <topology evidence="2">Multi-pass membrane protein</topology>
    </subcellularLocation>
</comment>
<comment type="domain">
    <text evidence="2">The central ion permeation pathway is formed by the first transmembrane domain from each of the five subunits. Mg(2+) binding strengthens interactions between subunits and leads to the formation of a symmetrical homopentamer surrounding a closed ion permeation pathway. Low Mg(2+) concentrations trigger both a conformation change within each subunit and a loosening of the interactions between subunits. This results in an open ion conduction pathway. In addition, this results in a less symmetrical shape of the whole complex.</text>
</comment>
<comment type="similarity">
    <text evidence="4">Belongs to the CorA metal ion transporter (MIT) (TC 1.A.35) family.</text>
</comment>
<evidence type="ECO:0000250" key="1">
    <source>
        <dbReference type="UniProtKB" id="P0ABI4"/>
    </source>
</evidence>
<evidence type="ECO:0000250" key="2">
    <source>
        <dbReference type="UniProtKB" id="Q9WZ31"/>
    </source>
</evidence>
<evidence type="ECO:0000255" key="3"/>
<evidence type="ECO:0000305" key="4"/>
<proteinExistence type="inferred from homology"/>
<feature type="chain" id="PRO_0000239094" description="Magnesium transport protein CorA">
    <location>
        <begin position="1"/>
        <end position="317"/>
    </location>
</feature>
<feature type="transmembrane region" description="Helical" evidence="3">
    <location>
        <begin position="259"/>
        <end position="279"/>
    </location>
</feature>
<feature type="transmembrane region" description="Helical" evidence="3">
    <location>
        <begin position="291"/>
        <end position="311"/>
    </location>
</feature>
<feature type="short sequence motif" description="Probable selectivity filter" evidence="2">
    <location>
        <begin position="278"/>
        <end position="280"/>
    </location>
</feature>
<feature type="site" description="Essential for ion permeation" evidence="2">
    <location>
        <position position="254"/>
    </location>
</feature>
<accession>Q7VN59</accession>
<reference key="1">
    <citation type="submission" date="2003-06" db="EMBL/GenBank/DDBJ databases">
        <title>The complete genome sequence of Haemophilus ducreyi.</title>
        <authorList>
            <person name="Munson R.S. Jr."/>
            <person name="Ray W.C."/>
            <person name="Mahairas G."/>
            <person name="Sabo P."/>
            <person name="Mungur R."/>
            <person name="Johnson L."/>
            <person name="Nguyen D."/>
            <person name="Wang J."/>
            <person name="Forst C."/>
            <person name="Hood L."/>
        </authorList>
    </citation>
    <scope>NUCLEOTIDE SEQUENCE [LARGE SCALE GENOMIC DNA]</scope>
    <source>
        <strain>35000HP / ATCC 700724</strain>
    </source>
</reference>
<name>CORA_HAEDU</name>
<protein>
    <recommendedName>
        <fullName>Magnesium transport protein CorA</fullName>
    </recommendedName>
</protein>
<sequence>MIRAFALDNARLVSLDENSPDQLNDAVWIDLVDPSEDERSVLKLGLDQTLAEELELEDLEASARFFEDEDGLHLHSFFYCLDDDDYADIATVAFTIRDGRLFTLRERDLPAFRLYRMRARREKLIDSNAYELLLDLFETKIEQLAGVLETVYSSLEKFSHVILDGKQEAESLNQVLSDLTELEDISSKVRLCLMDTQRALSFLLRKTRLPNNQLEQARDIMRDIESLQPHHESLFHKVNFLMQAAMGFINIEQNRIMKFFSVVSVMFLPATLVTSIYGMNFEIMPELQWDYGYPTALCMMITAAITPYLYFKRRGWL</sequence>
<dbReference type="EMBL" id="AE017143">
    <property type="protein sequence ID" value="AAP95635.1"/>
    <property type="molecule type" value="Genomic_DNA"/>
</dbReference>
<dbReference type="RefSeq" id="WP_010944687.1">
    <property type="nucleotide sequence ID" value="NC_002940.2"/>
</dbReference>
<dbReference type="SMR" id="Q7VN59"/>
<dbReference type="STRING" id="233412.HD_0721"/>
<dbReference type="GeneID" id="60733173"/>
<dbReference type="KEGG" id="hdu:HD_0721"/>
<dbReference type="eggNOG" id="COG0598">
    <property type="taxonomic scope" value="Bacteria"/>
</dbReference>
<dbReference type="HOGENOM" id="CLU_007127_5_0_6"/>
<dbReference type="OrthoDB" id="9803416at2"/>
<dbReference type="Proteomes" id="UP000001022">
    <property type="component" value="Chromosome"/>
</dbReference>
<dbReference type="GO" id="GO:0005886">
    <property type="term" value="C:plasma membrane"/>
    <property type="evidence" value="ECO:0007669"/>
    <property type="project" value="UniProtKB-SubCell"/>
</dbReference>
<dbReference type="GO" id="GO:0015087">
    <property type="term" value="F:cobalt ion transmembrane transporter activity"/>
    <property type="evidence" value="ECO:0007669"/>
    <property type="project" value="InterPro"/>
</dbReference>
<dbReference type="GO" id="GO:0015095">
    <property type="term" value="F:magnesium ion transmembrane transporter activity"/>
    <property type="evidence" value="ECO:0007669"/>
    <property type="project" value="InterPro"/>
</dbReference>
<dbReference type="GO" id="GO:0015099">
    <property type="term" value="F:nickel cation transmembrane transporter activity"/>
    <property type="evidence" value="ECO:0007669"/>
    <property type="project" value="TreeGrafter"/>
</dbReference>
<dbReference type="CDD" id="cd12835">
    <property type="entry name" value="EcCorA-like_1"/>
    <property type="match status" value="1"/>
</dbReference>
<dbReference type="FunFam" id="1.20.58.340:FF:000001">
    <property type="entry name" value="Magnesium transport protein CorA"/>
    <property type="match status" value="1"/>
</dbReference>
<dbReference type="Gene3D" id="1.20.58.340">
    <property type="entry name" value="Magnesium transport protein CorA, transmembrane region"/>
    <property type="match status" value="1"/>
</dbReference>
<dbReference type="InterPro" id="IPR045861">
    <property type="entry name" value="CorA_cytoplasmic_dom"/>
</dbReference>
<dbReference type="InterPro" id="IPR050829">
    <property type="entry name" value="CorA_MIT"/>
</dbReference>
<dbReference type="InterPro" id="IPR045863">
    <property type="entry name" value="CorA_TM1_TM2"/>
</dbReference>
<dbReference type="InterPro" id="IPR004488">
    <property type="entry name" value="Mg/Co-transport_prot_CorA"/>
</dbReference>
<dbReference type="InterPro" id="IPR002523">
    <property type="entry name" value="MgTranspt_CorA/ZnTranspt_ZntB"/>
</dbReference>
<dbReference type="NCBIfam" id="TIGR00383">
    <property type="entry name" value="corA"/>
    <property type="match status" value="1"/>
</dbReference>
<dbReference type="PANTHER" id="PTHR47685">
    <property type="entry name" value="MAGNESIUM TRANSPORT PROTEIN CORA"/>
    <property type="match status" value="1"/>
</dbReference>
<dbReference type="PANTHER" id="PTHR47685:SF1">
    <property type="entry name" value="MAGNESIUM TRANSPORT PROTEIN CORA"/>
    <property type="match status" value="1"/>
</dbReference>
<dbReference type="Pfam" id="PF01544">
    <property type="entry name" value="CorA"/>
    <property type="match status" value="1"/>
</dbReference>
<dbReference type="SUPFAM" id="SSF143865">
    <property type="entry name" value="CorA soluble domain-like"/>
    <property type="match status" value="1"/>
</dbReference>
<dbReference type="SUPFAM" id="SSF144083">
    <property type="entry name" value="Magnesium transport protein CorA, transmembrane region"/>
    <property type="match status" value="1"/>
</dbReference>